<feature type="transit peptide" description="Mitochondrion" evidence="1">
    <location>
        <begin position="1"/>
        <end position="37"/>
    </location>
</feature>
<feature type="chain" id="PRO_0000006101" description="Cytochrome c oxidase subunit 5A, mitochondrial">
    <location>
        <begin position="38"/>
        <end position="146"/>
    </location>
</feature>
<feature type="short sequence motif" description="SIFI-degron" evidence="2">
    <location>
        <begin position="2"/>
        <end position="16"/>
    </location>
</feature>
<feature type="modified residue" description="N6-acetyllysine" evidence="10">
    <location>
        <position position="83"/>
    </location>
</feature>
<feature type="modified residue" description="N6-acetyllysine" evidence="10">
    <location>
        <position position="109"/>
    </location>
</feature>
<feature type="modified residue" description="Phosphothreonine" evidence="2">
    <location>
        <position position="137"/>
    </location>
</feature>
<feature type="sequence conflict" description="In Ref. 1; CAA34085." evidence="5" ref="1">
    <location>
        <position position="11"/>
    </location>
</feature>
<feature type="helix" evidence="11">
    <location>
        <begin position="45"/>
        <end position="55"/>
    </location>
</feature>
<feature type="helix" evidence="11">
    <location>
        <begin position="63"/>
        <end position="72"/>
    </location>
</feature>
<feature type="helix" evidence="11">
    <location>
        <begin position="73"/>
        <end position="75"/>
    </location>
</feature>
<feature type="strand" evidence="11">
    <location>
        <begin position="76"/>
        <end position="78"/>
    </location>
</feature>
<feature type="helix" evidence="11">
    <location>
        <begin position="82"/>
        <end position="94"/>
    </location>
</feature>
<feature type="helix" evidence="11">
    <location>
        <begin position="99"/>
        <end position="111"/>
    </location>
</feature>
<feature type="helix" evidence="11">
    <location>
        <begin position="119"/>
        <end position="130"/>
    </location>
</feature>
<feature type="turn" evidence="11">
    <location>
        <begin position="138"/>
        <end position="142"/>
    </location>
</feature>
<reference key="1">
    <citation type="journal article" date="1989" name="Nucleic Acids Res.">
        <title>Nucleotide sequence of cDNA encoding mouse cytochrome c oxidase subunit Va.</title>
        <authorList>
            <person name="Ayane M."/>
            <person name="Nielson P.J."/>
            <person name="Koehler G."/>
        </authorList>
    </citation>
    <scope>NUCLEOTIDE SEQUENCE [MRNA]</scope>
    <source>
        <strain>BALB/cJ</strain>
        <tissue>Bone marrow</tissue>
    </source>
</reference>
<reference key="2">
    <citation type="journal article" date="2005" name="Science">
        <title>The transcriptional landscape of the mammalian genome.</title>
        <authorList>
            <person name="Carninci P."/>
            <person name="Kasukawa T."/>
            <person name="Katayama S."/>
            <person name="Gough J."/>
            <person name="Frith M.C."/>
            <person name="Maeda N."/>
            <person name="Oyama R."/>
            <person name="Ravasi T."/>
            <person name="Lenhard B."/>
            <person name="Wells C."/>
            <person name="Kodzius R."/>
            <person name="Shimokawa K."/>
            <person name="Bajic V.B."/>
            <person name="Brenner S.E."/>
            <person name="Batalov S."/>
            <person name="Forrest A.R."/>
            <person name="Zavolan M."/>
            <person name="Davis M.J."/>
            <person name="Wilming L.G."/>
            <person name="Aidinis V."/>
            <person name="Allen J.E."/>
            <person name="Ambesi-Impiombato A."/>
            <person name="Apweiler R."/>
            <person name="Aturaliya R.N."/>
            <person name="Bailey T.L."/>
            <person name="Bansal M."/>
            <person name="Baxter L."/>
            <person name="Beisel K.W."/>
            <person name="Bersano T."/>
            <person name="Bono H."/>
            <person name="Chalk A.M."/>
            <person name="Chiu K.P."/>
            <person name="Choudhary V."/>
            <person name="Christoffels A."/>
            <person name="Clutterbuck D.R."/>
            <person name="Crowe M.L."/>
            <person name="Dalla E."/>
            <person name="Dalrymple B.P."/>
            <person name="de Bono B."/>
            <person name="Della Gatta G."/>
            <person name="di Bernardo D."/>
            <person name="Down T."/>
            <person name="Engstrom P."/>
            <person name="Fagiolini M."/>
            <person name="Faulkner G."/>
            <person name="Fletcher C.F."/>
            <person name="Fukushima T."/>
            <person name="Furuno M."/>
            <person name="Futaki S."/>
            <person name="Gariboldi M."/>
            <person name="Georgii-Hemming P."/>
            <person name="Gingeras T.R."/>
            <person name="Gojobori T."/>
            <person name="Green R.E."/>
            <person name="Gustincich S."/>
            <person name="Harbers M."/>
            <person name="Hayashi Y."/>
            <person name="Hensch T.K."/>
            <person name="Hirokawa N."/>
            <person name="Hill D."/>
            <person name="Huminiecki L."/>
            <person name="Iacono M."/>
            <person name="Ikeo K."/>
            <person name="Iwama A."/>
            <person name="Ishikawa T."/>
            <person name="Jakt M."/>
            <person name="Kanapin A."/>
            <person name="Katoh M."/>
            <person name="Kawasawa Y."/>
            <person name="Kelso J."/>
            <person name="Kitamura H."/>
            <person name="Kitano H."/>
            <person name="Kollias G."/>
            <person name="Krishnan S.P."/>
            <person name="Kruger A."/>
            <person name="Kummerfeld S.K."/>
            <person name="Kurochkin I.V."/>
            <person name="Lareau L.F."/>
            <person name="Lazarevic D."/>
            <person name="Lipovich L."/>
            <person name="Liu J."/>
            <person name="Liuni S."/>
            <person name="McWilliam S."/>
            <person name="Madan Babu M."/>
            <person name="Madera M."/>
            <person name="Marchionni L."/>
            <person name="Matsuda H."/>
            <person name="Matsuzawa S."/>
            <person name="Miki H."/>
            <person name="Mignone F."/>
            <person name="Miyake S."/>
            <person name="Morris K."/>
            <person name="Mottagui-Tabar S."/>
            <person name="Mulder N."/>
            <person name="Nakano N."/>
            <person name="Nakauchi H."/>
            <person name="Ng P."/>
            <person name="Nilsson R."/>
            <person name="Nishiguchi S."/>
            <person name="Nishikawa S."/>
            <person name="Nori F."/>
            <person name="Ohara O."/>
            <person name="Okazaki Y."/>
            <person name="Orlando V."/>
            <person name="Pang K.C."/>
            <person name="Pavan W.J."/>
            <person name="Pavesi G."/>
            <person name="Pesole G."/>
            <person name="Petrovsky N."/>
            <person name="Piazza S."/>
            <person name="Reed J."/>
            <person name="Reid J.F."/>
            <person name="Ring B.Z."/>
            <person name="Ringwald M."/>
            <person name="Rost B."/>
            <person name="Ruan Y."/>
            <person name="Salzberg S.L."/>
            <person name="Sandelin A."/>
            <person name="Schneider C."/>
            <person name="Schoenbach C."/>
            <person name="Sekiguchi K."/>
            <person name="Semple C.A."/>
            <person name="Seno S."/>
            <person name="Sessa L."/>
            <person name="Sheng Y."/>
            <person name="Shibata Y."/>
            <person name="Shimada H."/>
            <person name="Shimada K."/>
            <person name="Silva D."/>
            <person name="Sinclair B."/>
            <person name="Sperling S."/>
            <person name="Stupka E."/>
            <person name="Sugiura K."/>
            <person name="Sultana R."/>
            <person name="Takenaka Y."/>
            <person name="Taki K."/>
            <person name="Tammoja K."/>
            <person name="Tan S.L."/>
            <person name="Tang S."/>
            <person name="Taylor M.S."/>
            <person name="Tegner J."/>
            <person name="Teichmann S.A."/>
            <person name="Ueda H.R."/>
            <person name="van Nimwegen E."/>
            <person name="Verardo R."/>
            <person name="Wei C.L."/>
            <person name="Yagi K."/>
            <person name="Yamanishi H."/>
            <person name="Zabarovsky E."/>
            <person name="Zhu S."/>
            <person name="Zimmer A."/>
            <person name="Hide W."/>
            <person name="Bult C."/>
            <person name="Grimmond S.M."/>
            <person name="Teasdale R.D."/>
            <person name="Liu E.T."/>
            <person name="Brusic V."/>
            <person name="Quackenbush J."/>
            <person name="Wahlestedt C."/>
            <person name="Mattick J.S."/>
            <person name="Hume D.A."/>
            <person name="Kai C."/>
            <person name="Sasaki D."/>
            <person name="Tomaru Y."/>
            <person name="Fukuda S."/>
            <person name="Kanamori-Katayama M."/>
            <person name="Suzuki M."/>
            <person name="Aoki J."/>
            <person name="Arakawa T."/>
            <person name="Iida J."/>
            <person name="Imamura K."/>
            <person name="Itoh M."/>
            <person name="Kato T."/>
            <person name="Kawaji H."/>
            <person name="Kawagashira N."/>
            <person name="Kawashima T."/>
            <person name="Kojima M."/>
            <person name="Kondo S."/>
            <person name="Konno H."/>
            <person name="Nakano K."/>
            <person name="Ninomiya N."/>
            <person name="Nishio T."/>
            <person name="Okada M."/>
            <person name="Plessy C."/>
            <person name="Shibata K."/>
            <person name="Shiraki T."/>
            <person name="Suzuki S."/>
            <person name="Tagami M."/>
            <person name="Waki K."/>
            <person name="Watahiki A."/>
            <person name="Okamura-Oho Y."/>
            <person name="Suzuki H."/>
            <person name="Kawai J."/>
            <person name="Hayashizaki Y."/>
        </authorList>
    </citation>
    <scope>NUCLEOTIDE SEQUENCE [LARGE SCALE MRNA]</scope>
    <source>
        <strain>C57BL/6J</strain>
        <tissue>Kidney</tissue>
    </source>
</reference>
<reference key="3">
    <citation type="journal article" date="2004" name="Genome Res.">
        <title>The status, quality, and expansion of the NIH full-length cDNA project: the Mammalian Gene Collection (MGC).</title>
        <authorList>
            <consortium name="The MGC Project Team"/>
        </authorList>
    </citation>
    <scope>NUCLEOTIDE SEQUENCE [LARGE SCALE MRNA]</scope>
    <source>
        <strain>FVB/N-3</strain>
        <tissue>Mammary tumor</tissue>
    </source>
</reference>
<reference key="4">
    <citation type="submission" date="2007-04" db="UniProtKB">
        <authorList>
            <person name="Lubec G."/>
            <person name="Kang S.U."/>
        </authorList>
    </citation>
    <scope>PROTEIN SEQUENCE OF 69-83 AND 95-103</scope>
    <scope>IDENTIFICATION BY MASS SPECTROMETRY</scope>
    <source>
        <strain>C57BL/6J</strain>
        <tissue>Brain</tissue>
    </source>
</reference>
<reference key="5">
    <citation type="journal article" date="2010" name="Cell">
        <title>A tissue-specific atlas of mouse protein phosphorylation and expression.</title>
        <authorList>
            <person name="Huttlin E.L."/>
            <person name="Jedrychowski M.P."/>
            <person name="Elias J.E."/>
            <person name="Goswami T."/>
            <person name="Rad R."/>
            <person name="Beausoleil S.A."/>
            <person name="Villen J."/>
            <person name="Haas W."/>
            <person name="Sowa M.E."/>
            <person name="Gygi S.P."/>
        </authorList>
    </citation>
    <scope>IDENTIFICATION BY MASS SPECTROMETRY [LARGE SCALE ANALYSIS]</scope>
    <source>
        <tissue>Brain</tissue>
        <tissue>Brown adipose tissue</tissue>
        <tissue>Heart</tissue>
        <tissue>Kidney</tissue>
        <tissue>Liver</tissue>
        <tissue>Lung</tissue>
        <tissue>Pancreas</tissue>
        <tissue>Spleen</tissue>
        <tissue>Testis</tissue>
    </source>
</reference>
<reference key="6">
    <citation type="journal article" date="2013" name="Proc. Natl. Acad. Sci. U.S.A.">
        <title>Label-free quantitative proteomics of the lysine acetylome in mitochondria identifies substrates of SIRT3 in metabolic pathways.</title>
        <authorList>
            <person name="Rardin M.J."/>
            <person name="Newman J.C."/>
            <person name="Held J.M."/>
            <person name="Cusack M.P."/>
            <person name="Sorensen D.J."/>
            <person name="Li B."/>
            <person name="Schilling B."/>
            <person name="Mooney S.D."/>
            <person name="Kahn C.R."/>
            <person name="Verdin E."/>
            <person name="Gibson B.W."/>
        </authorList>
    </citation>
    <scope>ACETYLATION [LARGE SCALE ANALYSIS] AT LYS-83 AND LYS-109</scope>
    <scope>IDENTIFICATION BY MASS SPECTROMETRY [LARGE SCALE ANALYSIS]</scope>
    <source>
        <tissue>Liver</tissue>
    </source>
</reference>
<reference evidence="6 7 8" key="7">
    <citation type="journal article" date="2021" name="Nature">
        <title>Structure and assembly of the mammalian mitochondrial supercomplex CIII2CIV.</title>
        <authorList>
            <person name="Vercellino I."/>
            <person name="Sazanov L.A."/>
        </authorList>
    </citation>
    <scope>STRUCTURE BY ELECTRON MICROSCOPY (3.20 ANGSTROMS) IN COMPLEX WITH MITOCHONDRIAL RESPIRATORY SUPERCOMPLEX</scope>
    <scope>FUNCTION</scope>
    <scope>PATHWAY</scope>
    <scope>SUBCELLULAR LOCATION</scope>
    <scope>SUBUNIT</scope>
</reference>
<reference evidence="9" key="8">
    <citation type="journal article" date="2024" name="Nat. Struct. Mol. Biol.">
        <title>SCAF1 drives the compositional diversity of mammalian respirasomes.</title>
        <authorList>
            <person name="Vercellino I."/>
            <person name="Sazanov L.A."/>
        </authorList>
    </citation>
    <scope>STRUCTURE BY ELECTRON MICROSCOPY (3.60 ANGSTROMS) IN COMPLEX WITH MITOCHONDRIAL RESPIRATORY SUPERCOMPLEX</scope>
    <scope>FUNCTION</scope>
    <scope>SUBCELLULAR LOCATION</scope>
    <scope>SUBUNIT</scope>
</reference>
<protein>
    <recommendedName>
        <fullName>Cytochrome c oxidase subunit 5A, mitochondrial</fullName>
    </recommendedName>
    <alternativeName>
        <fullName>Cytochrome c oxidase polypeptide Va</fullName>
    </alternativeName>
</protein>
<organism>
    <name type="scientific">Mus musculus</name>
    <name type="common">Mouse</name>
    <dbReference type="NCBI Taxonomy" id="10090"/>
    <lineage>
        <taxon>Eukaryota</taxon>
        <taxon>Metazoa</taxon>
        <taxon>Chordata</taxon>
        <taxon>Craniata</taxon>
        <taxon>Vertebrata</taxon>
        <taxon>Euteleostomi</taxon>
        <taxon>Mammalia</taxon>
        <taxon>Eutheria</taxon>
        <taxon>Euarchontoglires</taxon>
        <taxon>Glires</taxon>
        <taxon>Rodentia</taxon>
        <taxon>Myomorpha</taxon>
        <taxon>Muroidea</taxon>
        <taxon>Muridae</taxon>
        <taxon>Murinae</taxon>
        <taxon>Mus</taxon>
        <taxon>Mus</taxon>
    </lineage>
</organism>
<proteinExistence type="evidence at protein level"/>
<name>COX5A_MOUSE</name>
<keyword id="KW-0002">3D-structure</keyword>
<keyword id="KW-0007">Acetylation</keyword>
<keyword id="KW-0903">Direct protein sequencing</keyword>
<keyword id="KW-0349">Heme</keyword>
<keyword id="KW-0408">Iron</keyword>
<keyword id="KW-0472">Membrane</keyword>
<keyword id="KW-0479">Metal-binding</keyword>
<keyword id="KW-0496">Mitochondrion</keyword>
<keyword id="KW-0999">Mitochondrion inner membrane</keyword>
<keyword id="KW-0597">Phosphoprotein</keyword>
<keyword id="KW-1185">Reference proteome</keyword>
<keyword id="KW-0809">Transit peptide</keyword>
<keyword id="KW-0832">Ubl conjugation</keyword>
<gene>
    <name type="primary">Cox5a</name>
</gene>
<comment type="function">
    <text evidence="3 4">Component of the cytochrome c oxidase, the last enzyme in the mitochondrial electron transport chain which drives oxidative phosphorylation. The respiratory chain contains 3 multisubunit complexes succinate dehydrogenase (complex II, CII), ubiquinol-cytochrome c oxidoreductase (cytochrome b-c1 complex, complex III, CIII) and cytochrome c oxidase (complex IV, CIV), that cooperate to transfer electrons derived from NADH and succinate to molecular oxygen, creating an electrochemical gradient over the inner membrane that drives transmembrane transport and the ATP synthase. Cytochrome c oxidase is the component of the respiratory chain that catalyzes the reduction of oxygen to water. Electrons originating from reduced cytochrome c in the intermembrane space (IMS) are transferred via the dinuclear copper A center (CU(A)) of subunit 2 and heme A of subunit 1 to the active site in subunit 1, a binuclear center (BNC) formed by heme A3 and copper B (CU(B)). The BNC reduces molecular oxygen to 2 water molecules using 4 electrons from cytochrome c in the IMS and 4 protons from the mitochondrial matrix.</text>
</comment>
<comment type="pathway">
    <text evidence="3 4">Energy metabolism; oxidative phosphorylation.</text>
</comment>
<comment type="subunit">
    <text evidence="1 2 3 4">Component of the cytochrome c oxidase (complex IV, CIV), a multisubunit enzyme composed of 14 subunits (PubMed:34616041, PubMed:38575788). The complex is composed of a catalytic core of 3 subunits MT-CO1, MT-CO2 and MT-CO3, encoded in the mitochondrial DNA, and 11 supernumerary subunits COX4I, COX5A, COX5B, COX6A, COX6B, COX6C, COX7A, COX7B, COX7C, COX8 and NDUFA4, which are encoded in the nuclear genome (PubMed:34616041, PubMed:38575788). The complex exists as a monomer or a dimer and forms supercomplexes (SCs) in the inner mitochondrial membrane with NADH-ubiquinone oxidoreductase (complex I, CI) and ubiquinol-cytochrome c oxidoreductase (cytochrome b-c1 complex, complex III, CIII), resulting in different assemblies (supercomplex SCI(1)III(2)IV(1) and megacomplex MCI(2)III(2)IV(2)) (PubMed:34616041, PubMed:38575788). Interacts with AFG1L (By similarity). Interacts with RAB5IF (By similarity).</text>
</comment>
<comment type="subcellular location">
    <subcellularLocation>
        <location evidence="3 4">Mitochondrion inner membrane</location>
        <topology evidence="3 4">Peripheral membrane protein</topology>
        <orientation evidence="3 4">Matrix side</orientation>
    </subcellularLocation>
</comment>
<comment type="PTM">
    <text evidence="2">In response to mitochondrial stress, the precursor protein is ubiquitinated by the SIFI complex in the cytoplasm before mitochondrial import, leading to its degradation. Within the SIFI complex, UBR4 initiates ubiquitin chain that are further elongated or branched by KCMF1.</text>
</comment>
<comment type="similarity">
    <text evidence="5">Belongs to the cytochrome c oxidase subunit 5A family.</text>
</comment>
<accession>P12787</accession>
<accession>Q9D2W1</accession>
<sequence length="146" mass="16101">MLAAALRRCTAAAAARGLLHPASAPSPAAAVCSIRCYSHGSHETDEEFDARWVTYFNKPDIDAWELRKGMNTLVGYDLVPEPKIIDAALRACRRLNDFASAVRILEVVKDKAGPHKEIYPYVIQELRPTLNELGISTPEELGLDKV</sequence>
<evidence type="ECO:0000250" key="1">
    <source>
        <dbReference type="UniProtKB" id="P00426"/>
    </source>
</evidence>
<evidence type="ECO:0000250" key="2">
    <source>
        <dbReference type="UniProtKB" id="P20674"/>
    </source>
</evidence>
<evidence type="ECO:0000269" key="3">
    <source>
    </source>
</evidence>
<evidence type="ECO:0000269" key="4">
    <source>
    </source>
</evidence>
<evidence type="ECO:0000305" key="5"/>
<evidence type="ECO:0000312" key="6">
    <source>
        <dbReference type="PDB" id="7O3E"/>
    </source>
</evidence>
<evidence type="ECO:0007744" key="7">
    <source>
        <dbReference type="PDB" id="7O37"/>
    </source>
</evidence>
<evidence type="ECO:0007744" key="8">
    <source>
        <dbReference type="PDB" id="7O3C"/>
    </source>
</evidence>
<evidence type="ECO:0007744" key="9">
    <source>
        <dbReference type="PDB" id="8PW5"/>
    </source>
</evidence>
<evidence type="ECO:0007744" key="10">
    <source>
    </source>
</evidence>
<evidence type="ECO:0007829" key="11">
    <source>
        <dbReference type="PDB" id="7O37"/>
    </source>
</evidence>
<dbReference type="EMBL" id="X15963">
    <property type="protein sequence ID" value="CAA34085.1"/>
    <property type="molecule type" value="mRNA"/>
</dbReference>
<dbReference type="EMBL" id="AK018723">
    <property type="protein sequence ID" value="BAB31369.1"/>
    <property type="molecule type" value="mRNA"/>
</dbReference>
<dbReference type="EMBL" id="BC034302">
    <property type="protein sequence ID" value="AAH34302.1"/>
    <property type="molecule type" value="mRNA"/>
</dbReference>
<dbReference type="CCDS" id="CCDS23223.1"/>
<dbReference type="PIR" id="S05495">
    <property type="entry name" value="S05495"/>
</dbReference>
<dbReference type="RefSeq" id="NP_031773.2">
    <property type="nucleotide sequence ID" value="NM_007747.2"/>
</dbReference>
<dbReference type="RefSeq" id="XP_030099894.1">
    <property type="nucleotide sequence ID" value="XM_030244034.2"/>
</dbReference>
<dbReference type="RefSeq" id="XP_036010484.1">
    <property type="nucleotide sequence ID" value="XM_036154591.1"/>
</dbReference>
<dbReference type="PDB" id="7O37">
    <property type="method" value="EM"/>
    <property type="resolution" value="3.20 A"/>
    <property type="chains" value="e=38-146"/>
</dbReference>
<dbReference type="PDB" id="7O3C">
    <property type="method" value="EM"/>
    <property type="resolution" value="3.30 A"/>
    <property type="chains" value="e=38-146"/>
</dbReference>
<dbReference type="PDB" id="7O3E">
    <property type="method" value="EM"/>
    <property type="resolution" value="3.60 A"/>
    <property type="chains" value="e=38-146"/>
</dbReference>
<dbReference type="PDB" id="8PW5">
    <property type="method" value="EM"/>
    <property type="resolution" value="3.60 A"/>
    <property type="chains" value="e/r=1-146"/>
</dbReference>
<dbReference type="PDB" id="8PW6">
    <property type="method" value="EM"/>
    <property type="resolution" value="3.30 A"/>
    <property type="chains" value="r=1-146"/>
</dbReference>
<dbReference type="PDB" id="8PW7">
    <property type="method" value="EM"/>
    <property type="resolution" value="3.50 A"/>
    <property type="chains" value="r=1-146"/>
</dbReference>
<dbReference type="PDBsum" id="7O37"/>
<dbReference type="PDBsum" id="7O3C"/>
<dbReference type="PDBsum" id="7O3E"/>
<dbReference type="PDBsum" id="8PW5"/>
<dbReference type="PDBsum" id="8PW6"/>
<dbReference type="PDBsum" id="8PW7"/>
<dbReference type="EMDB" id="EMD-12702"/>
<dbReference type="EMDB" id="EMD-12703"/>
<dbReference type="EMDB" id="EMD-12705"/>
<dbReference type="EMDB" id="EMD-17989"/>
<dbReference type="EMDB" id="EMD-17990"/>
<dbReference type="EMDB" id="EMD-17991"/>
<dbReference type="SMR" id="P12787"/>
<dbReference type="BioGRID" id="198841">
    <property type="interactions" value="49"/>
</dbReference>
<dbReference type="CORUM" id="P12787"/>
<dbReference type="FunCoup" id="P12787">
    <property type="interactions" value="2119"/>
</dbReference>
<dbReference type="IntAct" id="P12787">
    <property type="interactions" value="10"/>
</dbReference>
<dbReference type="MINT" id="P12787"/>
<dbReference type="STRING" id="10090.ENSMUSP00000000090"/>
<dbReference type="GlyGen" id="P12787">
    <property type="glycosylation" value="2 sites, 1 O-linked glycan (2 sites)"/>
</dbReference>
<dbReference type="iPTMnet" id="P12787"/>
<dbReference type="PhosphoSitePlus" id="P12787"/>
<dbReference type="SwissPalm" id="P12787"/>
<dbReference type="jPOST" id="P12787"/>
<dbReference type="PaxDb" id="10090-ENSMUSP00000000090"/>
<dbReference type="PeptideAtlas" id="P12787"/>
<dbReference type="ProteomicsDB" id="284104"/>
<dbReference type="Pumba" id="P12787"/>
<dbReference type="TopDownProteomics" id="P12787"/>
<dbReference type="Antibodypedia" id="27166">
    <property type="antibodies" value="360 antibodies from 32 providers"/>
</dbReference>
<dbReference type="DNASU" id="12858"/>
<dbReference type="Ensembl" id="ENSMUST00000000090.8">
    <property type="protein sequence ID" value="ENSMUSP00000000090.7"/>
    <property type="gene ID" value="ENSMUSG00000000088.8"/>
</dbReference>
<dbReference type="GeneID" id="12858"/>
<dbReference type="KEGG" id="mmu:12858"/>
<dbReference type="UCSC" id="uc009puz.1">
    <property type="organism name" value="mouse"/>
</dbReference>
<dbReference type="AGR" id="MGI:88474"/>
<dbReference type="CTD" id="9377"/>
<dbReference type="MGI" id="MGI:88474">
    <property type="gene designation" value="Cox5a"/>
</dbReference>
<dbReference type="VEuPathDB" id="HostDB:ENSMUSG00000000088"/>
<dbReference type="eggNOG" id="KOG4077">
    <property type="taxonomic scope" value="Eukaryota"/>
</dbReference>
<dbReference type="GeneTree" id="ENSGT00390000001424"/>
<dbReference type="HOGENOM" id="CLU_099086_1_1_1"/>
<dbReference type="InParanoid" id="P12787"/>
<dbReference type="OMA" id="MEKWPAD"/>
<dbReference type="OrthoDB" id="5778907at2759"/>
<dbReference type="PhylomeDB" id="P12787"/>
<dbReference type="TreeFam" id="TF105062"/>
<dbReference type="Reactome" id="R-MMU-5628897">
    <property type="pathway name" value="TP53 Regulates Metabolic Genes"/>
</dbReference>
<dbReference type="Reactome" id="R-MMU-611105">
    <property type="pathway name" value="Respiratory electron transport"/>
</dbReference>
<dbReference type="Reactome" id="R-MMU-9707564">
    <property type="pathway name" value="Cytoprotection by HMOX1"/>
</dbReference>
<dbReference type="Reactome" id="R-MMU-9837999">
    <property type="pathway name" value="Mitochondrial protein degradation"/>
</dbReference>
<dbReference type="Reactome" id="R-MMU-9864848">
    <property type="pathway name" value="Complex IV assembly"/>
</dbReference>
<dbReference type="UniPathway" id="UPA00705"/>
<dbReference type="BioGRID-ORCS" id="12858">
    <property type="hits" value="20 hits in 78 CRISPR screens"/>
</dbReference>
<dbReference type="CD-CODE" id="CE726F99">
    <property type="entry name" value="Postsynaptic density"/>
</dbReference>
<dbReference type="ChiTaRS" id="Cox5a">
    <property type="organism name" value="mouse"/>
</dbReference>
<dbReference type="PRO" id="PR:P12787"/>
<dbReference type="Proteomes" id="UP000000589">
    <property type="component" value="Chromosome 9"/>
</dbReference>
<dbReference type="RNAct" id="P12787">
    <property type="molecule type" value="protein"/>
</dbReference>
<dbReference type="Bgee" id="ENSMUSG00000000088">
    <property type="expression patterns" value="Expressed in atrioventricular valve and 252 other cell types or tissues"/>
</dbReference>
<dbReference type="GO" id="GO:0005743">
    <property type="term" value="C:mitochondrial inner membrane"/>
    <property type="evidence" value="ECO:0000314"/>
    <property type="project" value="UniProtKB"/>
</dbReference>
<dbReference type="GO" id="GO:0005739">
    <property type="term" value="C:mitochondrion"/>
    <property type="evidence" value="ECO:0000314"/>
    <property type="project" value="MGI"/>
</dbReference>
<dbReference type="GO" id="GO:0043209">
    <property type="term" value="C:myelin sheath"/>
    <property type="evidence" value="ECO:0007005"/>
    <property type="project" value="UniProtKB"/>
</dbReference>
<dbReference type="GO" id="GO:0045277">
    <property type="term" value="C:respiratory chain complex IV"/>
    <property type="evidence" value="ECO:0000314"/>
    <property type="project" value="UniProtKB"/>
</dbReference>
<dbReference type="GO" id="GO:0004129">
    <property type="term" value="F:cytochrome-c oxidase activity"/>
    <property type="evidence" value="ECO:0007669"/>
    <property type="project" value="Ensembl"/>
</dbReference>
<dbReference type="GO" id="GO:0046872">
    <property type="term" value="F:metal ion binding"/>
    <property type="evidence" value="ECO:0007669"/>
    <property type="project" value="UniProtKB-KW"/>
</dbReference>
<dbReference type="GO" id="GO:0006123">
    <property type="term" value="P:mitochondrial electron transport, cytochrome c to oxygen"/>
    <property type="evidence" value="ECO:0007669"/>
    <property type="project" value="InterPro"/>
</dbReference>
<dbReference type="CDD" id="cd00923">
    <property type="entry name" value="Cyt_c_Oxidase_Va"/>
    <property type="match status" value="1"/>
</dbReference>
<dbReference type="FunFam" id="1.25.40.40:FF:000002">
    <property type="entry name" value="cytochrome c oxidase subunit 5A, mitochondrial"/>
    <property type="match status" value="1"/>
</dbReference>
<dbReference type="Gene3D" id="1.25.40.40">
    <property type="entry name" value="Cytochrome c oxidase, subunit Va/VI"/>
    <property type="match status" value="1"/>
</dbReference>
<dbReference type="InterPro" id="IPR003204">
    <property type="entry name" value="Cyt_c_oxidase_su5A/6"/>
</dbReference>
<dbReference type="InterPro" id="IPR036545">
    <property type="entry name" value="Cyt_c_oxidase_su5A/6_sf"/>
</dbReference>
<dbReference type="PANTHER" id="PTHR14200">
    <property type="entry name" value="CYTOCHROME C OXIDASE POLYPEPTIDE"/>
    <property type="match status" value="1"/>
</dbReference>
<dbReference type="PANTHER" id="PTHR14200:SF16">
    <property type="entry name" value="CYTOCHROME C OXIDASE SUBUNIT 5A, MITOCHONDRIAL"/>
    <property type="match status" value="1"/>
</dbReference>
<dbReference type="Pfam" id="PF02284">
    <property type="entry name" value="COX5A"/>
    <property type="match status" value="1"/>
</dbReference>
<dbReference type="SUPFAM" id="SSF48479">
    <property type="entry name" value="Cytochrome c oxidase subunit E"/>
    <property type="match status" value="1"/>
</dbReference>